<name>ARFC_MYCBO</name>
<sequence length="175" mass="18909">MEHVHWWLAGLAFTLGMVLTSTLMVRPVEHQVLVKKSVRGSSAKSKPPTARKPAVKSGTKREESPTAKTKVATESAAEQIPVAGEPAAEPIPVAGEPAARIPVVPYAPYGPGSARAGADGSGPQGWLVKGRSDTRLYYTPEDPTYDPTVAQVWFQDEESAARAFFTPWRKSTRRT</sequence>
<comment type="function">
    <text evidence="2">Required for wild-type expression of ArfA and ammonia secretion.</text>
</comment>
<comment type="subcellular location">
    <subcellularLocation>
        <location evidence="1">Cell membrane</location>
        <topology evidence="3">Single-pass membrane protein</topology>
    </subcellularLocation>
</comment>
<comment type="similarity">
    <text evidence="5">Belongs to the ArfC membrane protein family.</text>
</comment>
<reference key="1">
    <citation type="journal article" date="2003" name="Proc. Natl. Acad. Sci. U.S.A.">
        <title>The complete genome sequence of Mycobacterium bovis.</title>
        <authorList>
            <person name="Garnier T."/>
            <person name="Eiglmeier K."/>
            <person name="Camus J.-C."/>
            <person name="Medina N."/>
            <person name="Mansoor H."/>
            <person name="Pryor M."/>
            <person name="Duthoy S."/>
            <person name="Grondin S."/>
            <person name="Lacroix C."/>
            <person name="Monsempe C."/>
            <person name="Simon S."/>
            <person name="Harris B."/>
            <person name="Atkin R."/>
            <person name="Doggett J."/>
            <person name="Mayes R."/>
            <person name="Keating L."/>
            <person name="Wheeler P.R."/>
            <person name="Parkhill J."/>
            <person name="Barrell B.G."/>
            <person name="Cole S.T."/>
            <person name="Gordon S.V."/>
            <person name="Hewinson R.G."/>
        </authorList>
    </citation>
    <scope>NUCLEOTIDE SEQUENCE [LARGE SCALE GENOMIC DNA]</scope>
    <source>
        <strain>ATCC BAA-935 / AF2122/97</strain>
    </source>
</reference>
<reference key="2">
    <citation type="journal article" date="2017" name="Genome Announc.">
        <title>Updated reference genome sequence and annotation of Mycobacterium bovis AF2122/97.</title>
        <authorList>
            <person name="Malone K.M."/>
            <person name="Farrell D."/>
            <person name="Stuber T.P."/>
            <person name="Schubert O.T."/>
            <person name="Aebersold R."/>
            <person name="Robbe-Austerman S."/>
            <person name="Gordon S.V."/>
        </authorList>
    </citation>
    <scope>NUCLEOTIDE SEQUENCE [LARGE SCALE GENOMIC DNA]</scope>
    <scope>GENOME REANNOTATION</scope>
    <source>
        <strain>ATCC BAA-935 / AF2122/97</strain>
    </source>
</reference>
<accession>P64758</accession>
<accession>A0A1R3XXR0</accession>
<accession>Q10559</accession>
<accession>X2BGG0</accession>
<organism>
    <name type="scientific">Mycobacterium bovis (strain ATCC BAA-935 / AF2122/97)</name>
    <dbReference type="NCBI Taxonomy" id="233413"/>
    <lineage>
        <taxon>Bacteria</taxon>
        <taxon>Bacillati</taxon>
        <taxon>Actinomycetota</taxon>
        <taxon>Actinomycetes</taxon>
        <taxon>Mycobacteriales</taxon>
        <taxon>Mycobacteriaceae</taxon>
        <taxon>Mycobacterium</taxon>
        <taxon>Mycobacterium tuberculosis complex</taxon>
    </lineage>
</organism>
<protein>
    <recommendedName>
        <fullName>Uncharacterized membrane protein ArfC</fullName>
    </recommendedName>
</protein>
<proteinExistence type="inferred from homology"/>
<dbReference type="EMBL" id="LT708304">
    <property type="protein sequence ID" value="SIT99523.1"/>
    <property type="molecule type" value="Genomic_DNA"/>
</dbReference>
<dbReference type="RefSeq" id="NP_854582.1">
    <property type="nucleotide sequence ID" value="NC_002945.3"/>
</dbReference>
<dbReference type="RefSeq" id="WP_003404688.1">
    <property type="nucleotide sequence ID" value="NC_002945.4"/>
</dbReference>
<dbReference type="SMR" id="P64758"/>
<dbReference type="KEGG" id="mbo:BQ2027_MB0925"/>
<dbReference type="PATRIC" id="fig|233413.5.peg.1006"/>
<dbReference type="Proteomes" id="UP000001419">
    <property type="component" value="Chromosome"/>
</dbReference>
<dbReference type="GO" id="GO:0005886">
    <property type="term" value="C:plasma membrane"/>
    <property type="evidence" value="ECO:0007669"/>
    <property type="project" value="UniProtKB-SubCell"/>
</dbReference>
<evidence type="ECO:0000250" key="1">
    <source>
        <dbReference type="UniProtKB" id="A1KH33"/>
    </source>
</evidence>
<evidence type="ECO:0000250" key="2">
    <source>
        <dbReference type="UniProtKB" id="P9WJG5"/>
    </source>
</evidence>
<evidence type="ECO:0000255" key="3"/>
<evidence type="ECO:0000256" key="4">
    <source>
        <dbReference type="SAM" id="MobiDB-lite"/>
    </source>
</evidence>
<evidence type="ECO:0000305" key="5"/>
<feature type="chain" id="PRO_0000103742" description="Uncharacterized membrane protein ArfC">
    <location>
        <begin position="1"/>
        <end position="175"/>
    </location>
</feature>
<feature type="transmembrane region" description="Helical" evidence="3">
    <location>
        <begin position="4"/>
        <end position="26"/>
    </location>
</feature>
<feature type="region of interest" description="Disordered" evidence="4">
    <location>
        <begin position="36"/>
        <end position="93"/>
    </location>
</feature>
<gene>
    <name type="primary">arfC</name>
    <name type="ordered locus">BQ2027_MB0925</name>
</gene>
<keyword id="KW-1003">Cell membrane</keyword>
<keyword id="KW-0472">Membrane</keyword>
<keyword id="KW-1185">Reference proteome</keyword>
<keyword id="KW-0812">Transmembrane</keyword>
<keyword id="KW-1133">Transmembrane helix</keyword>